<comment type="function">
    <text evidence="1">Catalyzes the interconversion between ADP-D-glycero-beta-D-manno-heptose and ADP-L-glycero-beta-D-manno-heptose via an epimerization at carbon 6 of the heptose.</text>
</comment>
<comment type="catalytic activity">
    <reaction evidence="1">
        <text>ADP-D-glycero-beta-D-manno-heptose = ADP-L-glycero-beta-D-manno-heptose</text>
        <dbReference type="Rhea" id="RHEA:17577"/>
        <dbReference type="ChEBI" id="CHEBI:59967"/>
        <dbReference type="ChEBI" id="CHEBI:61506"/>
        <dbReference type="EC" id="5.1.3.20"/>
    </reaction>
</comment>
<comment type="cofactor">
    <cofactor evidence="1">
        <name>NADP(+)</name>
        <dbReference type="ChEBI" id="CHEBI:58349"/>
    </cofactor>
    <text evidence="1">Binds 1 NADP(+) per subunit.</text>
</comment>
<comment type="pathway">
    <text evidence="1">Nucleotide-sugar biosynthesis; ADP-L-glycero-beta-D-manno-heptose biosynthesis; ADP-L-glycero-beta-D-manno-heptose from D-glycero-beta-D-manno-heptose 7-phosphate: step 4/4.</text>
</comment>
<comment type="subunit">
    <text evidence="1">Homopentamer.</text>
</comment>
<comment type="domain">
    <text evidence="1">Contains a large N-terminal NADP-binding domain, and a smaller C-terminal substrate-binding domain.</text>
</comment>
<comment type="similarity">
    <text evidence="1">Belongs to the NAD(P)-dependent epimerase/dehydratase family. HldD subfamily.</text>
</comment>
<gene>
    <name evidence="1" type="primary">hldD</name>
    <name type="ordered locus">NMC0773</name>
</gene>
<proteinExistence type="inferred from homology"/>
<evidence type="ECO:0000255" key="1">
    <source>
        <dbReference type="HAMAP-Rule" id="MF_01601"/>
    </source>
</evidence>
<organism>
    <name type="scientific">Neisseria meningitidis serogroup C / serotype 2a (strain ATCC 700532 / DSM 15464 / FAM18)</name>
    <dbReference type="NCBI Taxonomy" id="272831"/>
    <lineage>
        <taxon>Bacteria</taxon>
        <taxon>Pseudomonadati</taxon>
        <taxon>Pseudomonadota</taxon>
        <taxon>Betaproteobacteria</taxon>
        <taxon>Neisseriales</taxon>
        <taxon>Neisseriaceae</taxon>
        <taxon>Neisseria</taxon>
    </lineage>
</organism>
<feature type="chain" id="PRO_1000069361" description="ADP-L-glycero-D-manno-heptose-6-epimerase">
    <location>
        <begin position="1"/>
        <end position="334"/>
    </location>
</feature>
<feature type="active site" description="Proton acceptor" evidence="1">
    <location>
        <position position="141"/>
    </location>
</feature>
<feature type="active site" description="Proton acceptor" evidence="1">
    <location>
        <position position="180"/>
    </location>
</feature>
<feature type="binding site" evidence="1">
    <location>
        <begin position="11"/>
        <end position="12"/>
    </location>
    <ligand>
        <name>NADP(+)</name>
        <dbReference type="ChEBI" id="CHEBI:58349"/>
    </ligand>
</feature>
<feature type="binding site" evidence="1">
    <location>
        <begin position="32"/>
        <end position="33"/>
    </location>
    <ligand>
        <name>NADP(+)</name>
        <dbReference type="ChEBI" id="CHEBI:58349"/>
    </ligand>
</feature>
<feature type="binding site" evidence="1">
    <location>
        <position position="39"/>
    </location>
    <ligand>
        <name>NADP(+)</name>
        <dbReference type="ChEBI" id="CHEBI:58349"/>
    </ligand>
</feature>
<feature type="binding site" evidence="1">
    <location>
        <position position="54"/>
    </location>
    <ligand>
        <name>NADP(+)</name>
        <dbReference type="ChEBI" id="CHEBI:58349"/>
    </ligand>
</feature>
<feature type="binding site" evidence="1">
    <location>
        <begin position="77"/>
        <end position="81"/>
    </location>
    <ligand>
        <name>NADP(+)</name>
        <dbReference type="ChEBI" id="CHEBI:58349"/>
    </ligand>
</feature>
<feature type="binding site" evidence="1">
    <location>
        <position position="94"/>
    </location>
    <ligand>
        <name>NADP(+)</name>
        <dbReference type="ChEBI" id="CHEBI:58349"/>
    </ligand>
</feature>
<feature type="binding site" evidence="1">
    <location>
        <position position="145"/>
    </location>
    <ligand>
        <name>NADP(+)</name>
        <dbReference type="ChEBI" id="CHEBI:58349"/>
    </ligand>
</feature>
<feature type="binding site" evidence="1">
    <location>
        <position position="171"/>
    </location>
    <ligand>
        <name>substrate</name>
    </ligand>
</feature>
<feature type="binding site" evidence="1">
    <location>
        <position position="172"/>
    </location>
    <ligand>
        <name>NADP(+)</name>
        <dbReference type="ChEBI" id="CHEBI:58349"/>
    </ligand>
</feature>
<feature type="binding site" evidence="1">
    <location>
        <position position="180"/>
    </location>
    <ligand>
        <name>NADP(+)</name>
        <dbReference type="ChEBI" id="CHEBI:58349"/>
    </ligand>
</feature>
<feature type="binding site" evidence="1">
    <location>
        <position position="182"/>
    </location>
    <ligand>
        <name>substrate</name>
    </ligand>
</feature>
<feature type="binding site" evidence="1">
    <location>
        <position position="189"/>
    </location>
    <ligand>
        <name>substrate</name>
    </ligand>
</feature>
<feature type="binding site" evidence="1">
    <location>
        <begin position="203"/>
        <end position="206"/>
    </location>
    <ligand>
        <name>substrate</name>
    </ligand>
</feature>
<feature type="binding site" evidence="1">
    <location>
        <position position="216"/>
    </location>
    <ligand>
        <name>substrate</name>
    </ligand>
</feature>
<feature type="binding site" evidence="1">
    <location>
        <position position="295"/>
    </location>
    <ligand>
        <name>substrate</name>
    </ligand>
</feature>
<dbReference type="EC" id="5.1.3.20" evidence="1"/>
<dbReference type="EMBL" id="AM421808">
    <property type="protein sequence ID" value="CAM10060.1"/>
    <property type="molecule type" value="Genomic_DNA"/>
</dbReference>
<dbReference type="SMR" id="A1KT78"/>
<dbReference type="KEGG" id="nmc:NMC0773"/>
<dbReference type="HOGENOM" id="CLU_007383_1_3_4"/>
<dbReference type="UniPathway" id="UPA00356">
    <property type="reaction ID" value="UER00440"/>
</dbReference>
<dbReference type="Proteomes" id="UP000002286">
    <property type="component" value="Chromosome"/>
</dbReference>
<dbReference type="GO" id="GO:0008712">
    <property type="term" value="F:ADP-glyceromanno-heptose 6-epimerase activity"/>
    <property type="evidence" value="ECO:0007669"/>
    <property type="project" value="UniProtKB-UniRule"/>
</dbReference>
<dbReference type="GO" id="GO:0050661">
    <property type="term" value="F:NADP binding"/>
    <property type="evidence" value="ECO:0007669"/>
    <property type="project" value="InterPro"/>
</dbReference>
<dbReference type="GO" id="GO:0097171">
    <property type="term" value="P:ADP-L-glycero-beta-D-manno-heptose biosynthetic process"/>
    <property type="evidence" value="ECO:0007669"/>
    <property type="project" value="UniProtKB-UniPathway"/>
</dbReference>
<dbReference type="GO" id="GO:0005975">
    <property type="term" value="P:carbohydrate metabolic process"/>
    <property type="evidence" value="ECO:0007669"/>
    <property type="project" value="UniProtKB-UniRule"/>
</dbReference>
<dbReference type="CDD" id="cd05248">
    <property type="entry name" value="ADP_GME_SDR_e"/>
    <property type="match status" value="1"/>
</dbReference>
<dbReference type="Gene3D" id="3.40.50.720">
    <property type="entry name" value="NAD(P)-binding Rossmann-like Domain"/>
    <property type="match status" value="1"/>
</dbReference>
<dbReference type="Gene3D" id="3.90.25.10">
    <property type="entry name" value="UDP-galactose 4-epimerase, domain 1"/>
    <property type="match status" value="1"/>
</dbReference>
<dbReference type="HAMAP" id="MF_01601">
    <property type="entry name" value="Heptose_epimerase"/>
    <property type="match status" value="1"/>
</dbReference>
<dbReference type="InterPro" id="IPR001509">
    <property type="entry name" value="Epimerase_deHydtase"/>
</dbReference>
<dbReference type="InterPro" id="IPR011912">
    <property type="entry name" value="Heptose_epim"/>
</dbReference>
<dbReference type="InterPro" id="IPR036291">
    <property type="entry name" value="NAD(P)-bd_dom_sf"/>
</dbReference>
<dbReference type="NCBIfam" id="TIGR02197">
    <property type="entry name" value="heptose_epim"/>
    <property type="match status" value="1"/>
</dbReference>
<dbReference type="PANTHER" id="PTHR43103:SF3">
    <property type="entry name" value="ADP-L-GLYCERO-D-MANNO-HEPTOSE-6-EPIMERASE"/>
    <property type="match status" value="1"/>
</dbReference>
<dbReference type="PANTHER" id="PTHR43103">
    <property type="entry name" value="NUCLEOSIDE-DIPHOSPHATE-SUGAR EPIMERASE"/>
    <property type="match status" value="1"/>
</dbReference>
<dbReference type="Pfam" id="PF01370">
    <property type="entry name" value="Epimerase"/>
    <property type="match status" value="1"/>
</dbReference>
<dbReference type="SUPFAM" id="SSF51735">
    <property type="entry name" value="NAD(P)-binding Rossmann-fold domains"/>
    <property type="match status" value="1"/>
</dbReference>
<reference key="1">
    <citation type="journal article" date="2007" name="PLoS Genet.">
        <title>Meningococcal genetic variation mechanisms viewed through comparative analysis of serogroup C strain FAM18.</title>
        <authorList>
            <person name="Bentley S.D."/>
            <person name="Vernikos G.S."/>
            <person name="Snyder L.A.S."/>
            <person name="Churcher C."/>
            <person name="Arrowsmith C."/>
            <person name="Chillingworth T."/>
            <person name="Cronin A."/>
            <person name="Davis P.H."/>
            <person name="Holroyd N.E."/>
            <person name="Jagels K."/>
            <person name="Maddison M."/>
            <person name="Moule S."/>
            <person name="Rabbinowitsch E."/>
            <person name="Sharp S."/>
            <person name="Unwin L."/>
            <person name="Whitehead S."/>
            <person name="Quail M.A."/>
            <person name="Achtman M."/>
            <person name="Barrell B.G."/>
            <person name="Saunders N.J."/>
            <person name="Parkhill J."/>
        </authorList>
    </citation>
    <scope>NUCLEOTIDE SEQUENCE [LARGE SCALE GENOMIC DNA]</scope>
    <source>
        <strain>ATCC 700532 / DSM 15464 / FAM18</strain>
    </source>
</reference>
<name>HLDD_NEIMF</name>
<protein>
    <recommendedName>
        <fullName evidence="1">ADP-L-glycero-D-manno-heptose-6-epimerase</fullName>
        <ecNumber evidence="1">5.1.3.20</ecNumber>
    </recommendedName>
    <alternativeName>
        <fullName evidence="1">ADP-L-glycero-beta-D-manno-heptose-6-epimerase</fullName>
        <shortName evidence="1">ADP-glyceromanno-heptose 6-epimerase</shortName>
        <shortName evidence="1">ADP-hep 6-epimerase</shortName>
        <shortName evidence="1">AGME</shortName>
    </alternativeName>
</protein>
<sequence>MTIIVTGAAGFIGSNIVKALNQRGITDIVAVDNLSKGEKFKNLAECEIAHYLDKHEFIRQVREHILPYQNIEAVFHQGACSDTMNHDGLYMMENNYQYTLDLLNWCQDERIPFLYASSAAVYGKGEIFREERELEKPLNVYGYSKFLFDQVLRRRMKEGLTAQVVGFRYFNVYGQHEQHKGRMASVTFHHFHQYREHGYVNLFGSNDGYGNGEQTRDFVSVEDVAKVNLYFFDHPELSGIYNLGTGRSQQFNELAAATVNACRAAEGKPEMSLKELVEEELIRYIPFPDALKGKYQSFTQADITKLREAGYKEEFFDVKSGVDRYVKWMLENLA</sequence>
<accession>A1KT78</accession>
<keyword id="KW-0119">Carbohydrate metabolism</keyword>
<keyword id="KW-0413">Isomerase</keyword>
<keyword id="KW-0521">NADP</keyword>